<evidence type="ECO:0000255" key="1">
    <source>
        <dbReference type="HAMAP-Rule" id="MF_00508"/>
    </source>
</evidence>
<evidence type="ECO:0000305" key="2"/>
<reference key="1">
    <citation type="journal article" date="2011" name="J. Bacteriol.">
        <title>Complete genome sequence and updated annotation of Desulfovibrio alaskensis G20.</title>
        <authorList>
            <person name="Hauser L.J."/>
            <person name="Land M.L."/>
            <person name="Brown S.D."/>
            <person name="Larimer F."/>
            <person name="Keller K.L."/>
            <person name="Rapp-Giles B.J."/>
            <person name="Price M.N."/>
            <person name="Lin M."/>
            <person name="Bruce D.C."/>
            <person name="Detter J.C."/>
            <person name="Tapia R."/>
            <person name="Han C.S."/>
            <person name="Goodwin L.A."/>
            <person name="Cheng J.F."/>
            <person name="Pitluck S."/>
            <person name="Copeland A."/>
            <person name="Lucas S."/>
            <person name="Nolan M."/>
            <person name="Lapidus A.L."/>
            <person name="Palumbo A.V."/>
            <person name="Wall J.D."/>
        </authorList>
    </citation>
    <scope>NUCLEOTIDE SEQUENCE [LARGE SCALE GENOMIC DNA]</scope>
    <source>
        <strain>ATCC BAA-1058 / DSM 17464 / G20</strain>
    </source>
</reference>
<sequence length="105" mass="11752">MTTVSSDRIRIKLKAYDYRILDKAVAEIVDTARNTGAGVAGPIPLPTNIHKFTVNRSVHVDKKSREQFEMRIHKRLMDILEPTQQTVDALGKLSLPAGVDVEIKL</sequence>
<organism>
    <name type="scientific">Oleidesulfovibrio alaskensis (strain ATCC BAA-1058 / DSM 17464 / G20)</name>
    <name type="common">Desulfovibrio alaskensis</name>
    <dbReference type="NCBI Taxonomy" id="207559"/>
    <lineage>
        <taxon>Bacteria</taxon>
        <taxon>Pseudomonadati</taxon>
        <taxon>Thermodesulfobacteriota</taxon>
        <taxon>Desulfovibrionia</taxon>
        <taxon>Desulfovibrionales</taxon>
        <taxon>Desulfovibrionaceae</taxon>
        <taxon>Oleidesulfovibrio</taxon>
    </lineage>
</organism>
<protein>
    <recommendedName>
        <fullName evidence="1">Small ribosomal subunit protein uS10</fullName>
    </recommendedName>
    <alternativeName>
        <fullName evidence="2">30S ribosomal protein S10</fullName>
    </alternativeName>
</protein>
<proteinExistence type="inferred from homology"/>
<feature type="chain" id="PRO_0000237039" description="Small ribosomal subunit protein uS10">
    <location>
        <begin position="1"/>
        <end position="105"/>
    </location>
</feature>
<accession>Q30Z41</accession>
<name>RS10_OLEA2</name>
<comment type="function">
    <text evidence="1">Involved in the binding of tRNA to the ribosomes.</text>
</comment>
<comment type="subunit">
    <text evidence="1">Part of the 30S ribosomal subunit.</text>
</comment>
<comment type="similarity">
    <text evidence="1">Belongs to the universal ribosomal protein uS10 family.</text>
</comment>
<keyword id="KW-1185">Reference proteome</keyword>
<keyword id="KW-0687">Ribonucleoprotein</keyword>
<keyword id="KW-0689">Ribosomal protein</keyword>
<dbReference type="EMBL" id="CP000112">
    <property type="protein sequence ID" value="ABB39055.1"/>
    <property type="molecule type" value="Genomic_DNA"/>
</dbReference>
<dbReference type="RefSeq" id="WP_010938597.1">
    <property type="nucleotide sequence ID" value="NC_007519.1"/>
</dbReference>
<dbReference type="SMR" id="Q30Z41"/>
<dbReference type="STRING" id="207559.Dde_2258"/>
<dbReference type="KEGG" id="dde:Dde_2258"/>
<dbReference type="eggNOG" id="COG0051">
    <property type="taxonomic scope" value="Bacteria"/>
</dbReference>
<dbReference type="HOGENOM" id="CLU_122625_1_3_7"/>
<dbReference type="Proteomes" id="UP000002710">
    <property type="component" value="Chromosome"/>
</dbReference>
<dbReference type="GO" id="GO:1990904">
    <property type="term" value="C:ribonucleoprotein complex"/>
    <property type="evidence" value="ECO:0007669"/>
    <property type="project" value="UniProtKB-KW"/>
</dbReference>
<dbReference type="GO" id="GO:0005840">
    <property type="term" value="C:ribosome"/>
    <property type="evidence" value="ECO:0007669"/>
    <property type="project" value="UniProtKB-KW"/>
</dbReference>
<dbReference type="GO" id="GO:0003735">
    <property type="term" value="F:structural constituent of ribosome"/>
    <property type="evidence" value="ECO:0007669"/>
    <property type="project" value="InterPro"/>
</dbReference>
<dbReference type="GO" id="GO:0000049">
    <property type="term" value="F:tRNA binding"/>
    <property type="evidence" value="ECO:0007669"/>
    <property type="project" value="UniProtKB-UniRule"/>
</dbReference>
<dbReference type="GO" id="GO:0006412">
    <property type="term" value="P:translation"/>
    <property type="evidence" value="ECO:0007669"/>
    <property type="project" value="UniProtKB-UniRule"/>
</dbReference>
<dbReference type="FunFam" id="3.30.70.600:FF:000003">
    <property type="entry name" value="30S ribosomal protein S10"/>
    <property type="match status" value="1"/>
</dbReference>
<dbReference type="Gene3D" id="3.30.70.600">
    <property type="entry name" value="Ribosomal protein S10 domain"/>
    <property type="match status" value="1"/>
</dbReference>
<dbReference type="HAMAP" id="MF_00508">
    <property type="entry name" value="Ribosomal_uS10"/>
    <property type="match status" value="1"/>
</dbReference>
<dbReference type="InterPro" id="IPR001848">
    <property type="entry name" value="Ribosomal_uS10"/>
</dbReference>
<dbReference type="InterPro" id="IPR018268">
    <property type="entry name" value="Ribosomal_uS10_CS"/>
</dbReference>
<dbReference type="InterPro" id="IPR027486">
    <property type="entry name" value="Ribosomal_uS10_dom"/>
</dbReference>
<dbReference type="InterPro" id="IPR036838">
    <property type="entry name" value="Ribosomal_uS10_dom_sf"/>
</dbReference>
<dbReference type="NCBIfam" id="NF001861">
    <property type="entry name" value="PRK00596.1"/>
    <property type="match status" value="1"/>
</dbReference>
<dbReference type="NCBIfam" id="TIGR01049">
    <property type="entry name" value="rpsJ_bact"/>
    <property type="match status" value="1"/>
</dbReference>
<dbReference type="PANTHER" id="PTHR11700">
    <property type="entry name" value="30S RIBOSOMAL PROTEIN S10 FAMILY MEMBER"/>
    <property type="match status" value="1"/>
</dbReference>
<dbReference type="Pfam" id="PF00338">
    <property type="entry name" value="Ribosomal_S10"/>
    <property type="match status" value="1"/>
</dbReference>
<dbReference type="PRINTS" id="PR00971">
    <property type="entry name" value="RIBOSOMALS10"/>
</dbReference>
<dbReference type="SMART" id="SM01403">
    <property type="entry name" value="Ribosomal_S10"/>
    <property type="match status" value="1"/>
</dbReference>
<dbReference type="SUPFAM" id="SSF54999">
    <property type="entry name" value="Ribosomal protein S10"/>
    <property type="match status" value="1"/>
</dbReference>
<dbReference type="PROSITE" id="PS00361">
    <property type="entry name" value="RIBOSOMAL_S10"/>
    <property type="match status" value="1"/>
</dbReference>
<gene>
    <name evidence="1" type="primary">rpsJ</name>
    <name type="ordered locus">Dde_2258</name>
</gene>